<organismHost>
    <name type="scientific">Gallus gallus</name>
    <name type="common">Chicken</name>
    <dbReference type="NCBI Taxonomy" id="9031"/>
</organismHost>
<sequence>MHGNGGQPAAGGSESALSREGQPGPSGAAQGQVISNERSPRRYSTRTINGVQATNKFTAVGNPSLQRDPDWYRWNYNHSIAVWLRECSRSHAKICNCGQFRKHWFQECAGLEDRSTQASLEEAILRPLRVQGKRAKRKLDYHYSQPTPNRKKVYKTVRWQDELADREADFTPSEEDGGTTSSDFDEDINFDIGGDSGIVDELLGRPFTTPAPVRIV</sequence>
<proteinExistence type="evidence at transcript level"/>
<dbReference type="EC" id="3.1.3.16"/>
<dbReference type="EC" id="3.1.3.48"/>
<dbReference type="EMBL" id="L14767">
    <property type="protein sequence ID" value="AAD09422.1"/>
    <property type="molecule type" value="Genomic_DNA"/>
</dbReference>
<dbReference type="PIR" id="A39926">
    <property type="entry name" value="A39926"/>
</dbReference>
<dbReference type="Proteomes" id="UP000008444">
    <property type="component" value="Genome"/>
</dbReference>
<dbReference type="GO" id="GO:0004722">
    <property type="term" value="F:protein serine/threonine phosphatase activity"/>
    <property type="evidence" value="ECO:0007669"/>
    <property type="project" value="UniProtKB-EC"/>
</dbReference>
<dbReference type="GO" id="GO:0004725">
    <property type="term" value="F:protein tyrosine phosphatase activity"/>
    <property type="evidence" value="ECO:0007669"/>
    <property type="project" value="UniProtKB-EC"/>
</dbReference>
<dbReference type="InterPro" id="IPR004118">
    <property type="entry name" value="HEV_TT_vir_Orf2/Gyrovir_Vp2_N"/>
</dbReference>
<dbReference type="Pfam" id="PF02957">
    <property type="entry name" value="TT_ORF2-like"/>
    <property type="match status" value="1"/>
</dbReference>
<protein>
    <recommendedName>
        <fullName>Dual specificity protein phosphatase VP2</fullName>
        <ecNumber>3.1.3.16</ecNumber>
        <ecNumber>3.1.3.48</ecNumber>
    </recommendedName>
</protein>
<keyword id="KW-0244">Early protein</keyword>
<keyword id="KW-0378">Hydrolase</keyword>
<keyword id="KW-0904">Protein phosphatase</keyword>
<comment type="function">
    <text evidence="1">May act as a scaffold protein in virion assembly. May also play a role in intracellular signaling during viral replication (By similarity).</text>
</comment>
<comment type="catalytic activity">
    <reaction>
        <text>O-phospho-L-tyrosyl-[protein] + H2O = L-tyrosyl-[protein] + phosphate</text>
        <dbReference type="Rhea" id="RHEA:10684"/>
        <dbReference type="Rhea" id="RHEA-COMP:10136"/>
        <dbReference type="Rhea" id="RHEA-COMP:20101"/>
        <dbReference type="ChEBI" id="CHEBI:15377"/>
        <dbReference type="ChEBI" id="CHEBI:43474"/>
        <dbReference type="ChEBI" id="CHEBI:46858"/>
        <dbReference type="ChEBI" id="CHEBI:61978"/>
        <dbReference type="EC" id="3.1.3.48"/>
    </reaction>
</comment>
<comment type="catalytic activity">
    <reaction>
        <text>O-phospho-L-seryl-[protein] + H2O = L-seryl-[protein] + phosphate</text>
        <dbReference type="Rhea" id="RHEA:20629"/>
        <dbReference type="Rhea" id="RHEA-COMP:9863"/>
        <dbReference type="Rhea" id="RHEA-COMP:11604"/>
        <dbReference type="ChEBI" id="CHEBI:15377"/>
        <dbReference type="ChEBI" id="CHEBI:29999"/>
        <dbReference type="ChEBI" id="CHEBI:43474"/>
        <dbReference type="ChEBI" id="CHEBI:83421"/>
        <dbReference type="EC" id="3.1.3.16"/>
    </reaction>
</comment>
<comment type="catalytic activity">
    <reaction>
        <text>O-phospho-L-threonyl-[protein] + H2O = L-threonyl-[protein] + phosphate</text>
        <dbReference type="Rhea" id="RHEA:47004"/>
        <dbReference type="Rhea" id="RHEA-COMP:11060"/>
        <dbReference type="Rhea" id="RHEA-COMP:11605"/>
        <dbReference type="ChEBI" id="CHEBI:15377"/>
        <dbReference type="ChEBI" id="CHEBI:30013"/>
        <dbReference type="ChEBI" id="CHEBI:43474"/>
        <dbReference type="ChEBI" id="CHEBI:61977"/>
        <dbReference type="EC" id="3.1.3.16"/>
    </reaction>
</comment>
<comment type="induction">
    <text>VP1 and VP2 are detected 12 hours post infection, while VP3 only after 24 hours.</text>
</comment>
<comment type="similarity">
    <text evidence="3">Belongs to the gyrovirus protein VP2 family.</text>
</comment>
<gene>
    <name type="primary">VP2</name>
</gene>
<reference key="1">
    <citation type="journal article" date="1996" name="J. Virol.">
        <title>A hypervariable region in VP1 of chicken infectious anemia virus mediates rate of spread and cell tropism in tissue culture.</title>
        <authorList>
            <person name="Renshaw R.W."/>
            <person name="Soine C."/>
            <person name="Weinkle T."/>
            <person name="O'Connell P.H."/>
            <person name="Ohashi K."/>
            <person name="Watson S."/>
            <person name="Lucio B."/>
            <person name="Harrington S."/>
            <person name="Schat K.A."/>
        </authorList>
    </citation>
    <scope>NUCLEOTIDE SEQUENCE [GENOMIC DNA]</scope>
</reference>
<reference key="2">
    <citation type="submission" date="1999-01" db="EMBL/GenBank/DDBJ databases">
        <authorList>
            <person name="Renshaw R.W."/>
        </authorList>
    </citation>
    <scope>SEQUENCE REVISION TO 24</scope>
</reference>
<evidence type="ECO:0000250" key="1"/>
<evidence type="ECO:0000256" key="2">
    <source>
        <dbReference type="SAM" id="MobiDB-lite"/>
    </source>
</evidence>
<evidence type="ECO:0000305" key="3"/>
<accession>P69485</accession>
<accession>P54091</accession>
<accession>Q99151</accession>
<feature type="chain" id="PRO_0000223005" description="Dual specificity protein phosphatase VP2">
    <location>
        <begin position="1"/>
        <end position="216"/>
    </location>
</feature>
<feature type="region of interest" description="Disordered" evidence="2">
    <location>
        <begin position="1"/>
        <end position="50"/>
    </location>
</feature>
<feature type="region of interest" description="Disordered" evidence="2">
    <location>
        <begin position="165"/>
        <end position="187"/>
    </location>
</feature>
<feature type="compositionally biased region" description="Low complexity" evidence="2">
    <location>
        <begin position="21"/>
        <end position="32"/>
    </location>
</feature>
<feature type="compositionally biased region" description="Acidic residues" evidence="2">
    <location>
        <begin position="172"/>
        <end position="187"/>
    </location>
</feature>
<feature type="active site" description="Phosphocysteine intermediate" evidence="1">
    <location>
        <position position="95"/>
    </location>
</feature>
<name>VP2_CAVCI</name>
<organism>
    <name type="scientific">Chicken anemia virus (isolate USA CIA-1)</name>
    <name type="common">CAV</name>
    <dbReference type="NCBI Taxonomy" id="73478"/>
    <lineage>
        <taxon>Viruses</taxon>
        <taxon>Viruses incertae sedis</taxon>
        <taxon>Anelloviridae</taxon>
        <taxon>Gyrovirus</taxon>
        <taxon>Gyrovirus chickenanemia</taxon>
    </lineage>
</organism>